<gene>
    <name type="ordered locus">BBta_1313</name>
</gene>
<name>Y1313_BRASB</name>
<protein>
    <recommendedName>
        <fullName evidence="1">PKHD-type hydroxylase BBta_1313</fullName>
        <ecNumber evidence="1">1.14.11.-</ecNumber>
    </recommendedName>
</protein>
<comment type="cofactor">
    <cofactor evidence="1">
        <name>Fe(2+)</name>
        <dbReference type="ChEBI" id="CHEBI:29033"/>
    </cofactor>
    <text evidence="1">Binds 1 Fe(2+) ion per subunit.</text>
</comment>
<comment type="cofactor">
    <cofactor evidence="1">
        <name>L-ascorbate</name>
        <dbReference type="ChEBI" id="CHEBI:38290"/>
    </cofactor>
</comment>
<accession>A5EBK6</accession>
<proteinExistence type="inferred from homology"/>
<feature type="chain" id="PRO_0000346464" description="PKHD-type hydroxylase BBta_1313">
    <location>
        <begin position="1"/>
        <end position="229"/>
    </location>
</feature>
<feature type="domain" description="Fe2OG dioxygenase" evidence="1">
    <location>
        <begin position="78"/>
        <end position="180"/>
    </location>
</feature>
<feature type="binding site" evidence="1">
    <location>
        <position position="98"/>
    </location>
    <ligand>
        <name>Fe cation</name>
        <dbReference type="ChEBI" id="CHEBI:24875"/>
    </ligand>
</feature>
<feature type="binding site" evidence="1">
    <location>
        <position position="100"/>
    </location>
    <ligand>
        <name>Fe cation</name>
        <dbReference type="ChEBI" id="CHEBI:24875"/>
    </ligand>
</feature>
<feature type="binding site" evidence="1">
    <location>
        <position position="161"/>
    </location>
    <ligand>
        <name>Fe cation</name>
        <dbReference type="ChEBI" id="CHEBI:24875"/>
    </ligand>
</feature>
<feature type="binding site" evidence="1">
    <location>
        <position position="171"/>
    </location>
    <ligand>
        <name>2-oxoglutarate</name>
        <dbReference type="ChEBI" id="CHEBI:16810"/>
    </ligand>
</feature>
<dbReference type="EC" id="1.14.11.-" evidence="1"/>
<dbReference type="EMBL" id="CP000494">
    <property type="protein sequence ID" value="ABQ33550.1"/>
    <property type="molecule type" value="Genomic_DNA"/>
</dbReference>
<dbReference type="RefSeq" id="WP_041750382.1">
    <property type="nucleotide sequence ID" value="NC_009485.1"/>
</dbReference>
<dbReference type="SMR" id="A5EBK6"/>
<dbReference type="STRING" id="288000.BBta_1313"/>
<dbReference type="KEGG" id="bbt:BBta_1313"/>
<dbReference type="eggNOG" id="COG3128">
    <property type="taxonomic scope" value="Bacteria"/>
</dbReference>
<dbReference type="HOGENOM" id="CLU_106663_0_0_5"/>
<dbReference type="OrthoDB" id="9812472at2"/>
<dbReference type="Proteomes" id="UP000000246">
    <property type="component" value="Chromosome"/>
</dbReference>
<dbReference type="GO" id="GO:0016706">
    <property type="term" value="F:2-oxoglutarate-dependent dioxygenase activity"/>
    <property type="evidence" value="ECO:0007669"/>
    <property type="project" value="UniProtKB-UniRule"/>
</dbReference>
<dbReference type="GO" id="GO:0005506">
    <property type="term" value="F:iron ion binding"/>
    <property type="evidence" value="ECO:0007669"/>
    <property type="project" value="UniProtKB-UniRule"/>
</dbReference>
<dbReference type="GO" id="GO:0031418">
    <property type="term" value="F:L-ascorbic acid binding"/>
    <property type="evidence" value="ECO:0007669"/>
    <property type="project" value="UniProtKB-KW"/>
</dbReference>
<dbReference type="GO" id="GO:0006974">
    <property type="term" value="P:DNA damage response"/>
    <property type="evidence" value="ECO:0007669"/>
    <property type="project" value="TreeGrafter"/>
</dbReference>
<dbReference type="GO" id="GO:0006879">
    <property type="term" value="P:intracellular iron ion homeostasis"/>
    <property type="evidence" value="ECO:0007669"/>
    <property type="project" value="TreeGrafter"/>
</dbReference>
<dbReference type="Gene3D" id="2.60.120.620">
    <property type="entry name" value="q2cbj1_9rhob like domain"/>
    <property type="match status" value="1"/>
</dbReference>
<dbReference type="Gene3D" id="4.10.860.20">
    <property type="entry name" value="Rabenosyn, Rab binding domain"/>
    <property type="match status" value="1"/>
</dbReference>
<dbReference type="HAMAP" id="MF_00657">
    <property type="entry name" value="Hydroxyl_YbiX"/>
    <property type="match status" value="1"/>
</dbReference>
<dbReference type="InterPro" id="IPR005123">
    <property type="entry name" value="Oxoglu/Fe-dep_dioxygenase_dom"/>
</dbReference>
<dbReference type="InterPro" id="IPR041097">
    <property type="entry name" value="PKHD_C"/>
</dbReference>
<dbReference type="InterPro" id="IPR023550">
    <property type="entry name" value="PKHD_hydroxylase"/>
</dbReference>
<dbReference type="InterPro" id="IPR006620">
    <property type="entry name" value="Pro_4_hyd_alph"/>
</dbReference>
<dbReference type="InterPro" id="IPR044862">
    <property type="entry name" value="Pro_4_hyd_alph_FE2OG_OXY"/>
</dbReference>
<dbReference type="NCBIfam" id="NF003973">
    <property type="entry name" value="PRK05467.1-2"/>
    <property type="match status" value="1"/>
</dbReference>
<dbReference type="NCBIfam" id="NF003974">
    <property type="entry name" value="PRK05467.1-3"/>
    <property type="match status" value="1"/>
</dbReference>
<dbReference type="NCBIfam" id="NF003975">
    <property type="entry name" value="PRK05467.1-4"/>
    <property type="match status" value="1"/>
</dbReference>
<dbReference type="PANTHER" id="PTHR41536">
    <property type="entry name" value="PKHD-TYPE HYDROXYLASE YBIX"/>
    <property type="match status" value="1"/>
</dbReference>
<dbReference type="PANTHER" id="PTHR41536:SF1">
    <property type="entry name" value="PKHD-TYPE HYDROXYLASE YBIX"/>
    <property type="match status" value="1"/>
</dbReference>
<dbReference type="Pfam" id="PF13640">
    <property type="entry name" value="2OG-FeII_Oxy_3"/>
    <property type="match status" value="1"/>
</dbReference>
<dbReference type="Pfam" id="PF18331">
    <property type="entry name" value="PKHD_C"/>
    <property type="match status" value="1"/>
</dbReference>
<dbReference type="SMART" id="SM00702">
    <property type="entry name" value="P4Hc"/>
    <property type="match status" value="1"/>
</dbReference>
<dbReference type="PROSITE" id="PS51471">
    <property type="entry name" value="FE2OG_OXY"/>
    <property type="match status" value="1"/>
</dbReference>
<reference key="1">
    <citation type="journal article" date="2007" name="Science">
        <title>Legumes symbioses: absence of nod genes in photosynthetic bradyrhizobia.</title>
        <authorList>
            <person name="Giraud E."/>
            <person name="Moulin L."/>
            <person name="Vallenet D."/>
            <person name="Barbe V."/>
            <person name="Cytryn E."/>
            <person name="Avarre J.-C."/>
            <person name="Jaubert M."/>
            <person name="Simon D."/>
            <person name="Cartieaux F."/>
            <person name="Prin Y."/>
            <person name="Bena G."/>
            <person name="Hannibal L."/>
            <person name="Fardoux J."/>
            <person name="Kojadinovic M."/>
            <person name="Vuillet L."/>
            <person name="Lajus A."/>
            <person name="Cruveiller S."/>
            <person name="Rouy Z."/>
            <person name="Mangenot S."/>
            <person name="Segurens B."/>
            <person name="Dossat C."/>
            <person name="Franck W.L."/>
            <person name="Chang W.-S."/>
            <person name="Saunders E."/>
            <person name="Bruce D."/>
            <person name="Richardson P."/>
            <person name="Normand P."/>
            <person name="Dreyfus B."/>
            <person name="Pignol D."/>
            <person name="Stacey G."/>
            <person name="Emerich D."/>
            <person name="Vermeglio A."/>
            <person name="Medigue C."/>
            <person name="Sadowsky M."/>
        </authorList>
    </citation>
    <scope>NUCLEOTIDE SEQUENCE [LARGE SCALE GENOMIC DNA]</scope>
    <source>
        <strain>BTAi1 / ATCC BAA-1182</strain>
    </source>
</reference>
<evidence type="ECO:0000255" key="1">
    <source>
        <dbReference type="HAMAP-Rule" id="MF_00657"/>
    </source>
</evidence>
<keyword id="KW-0223">Dioxygenase</keyword>
<keyword id="KW-0408">Iron</keyword>
<keyword id="KW-0479">Metal-binding</keyword>
<keyword id="KW-0560">Oxidoreductase</keyword>
<keyword id="KW-1185">Reference proteome</keyword>
<keyword id="KW-0847">Vitamin C</keyword>
<sequence length="229" mass="25745">MLICVPGILSKDDVAEFRHIMDSSDWEDGRSTAGAQSAMVKRNEQLPPDSEVARKLGHRIISAMTANPRFLAAAIPQHIFPPLFNRYAADSGHHFGIHVDNAVRGDKLTGLRIRTDLSVTLFLSEPEEYDGGELVIEDLYGSHEVKLPAGDLVLYPASSLHMVTPVTRGVRIASFFWLQSMIRDPLARSMIFDLDTTIQDLSRRMGRDDPEMVRLTGLYHNLIRYWAET</sequence>
<organism>
    <name type="scientific">Bradyrhizobium sp. (strain BTAi1 / ATCC BAA-1182)</name>
    <dbReference type="NCBI Taxonomy" id="288000"/>
    <lineage>
        <taxon>Bacteria</taxon>
        <taxon>Pseudomonadati</taxon>
        <taxon>Pseudomonadota</taxon>
        <taxon>Alphaproteobacteria</taxon>
        <taxon>Hyphomicrobiales</taxon>
        <taxon>Nitrobacteraceae</taxon>
        <taxon>Bradyrhizobium</taxon>
    </lineage>
</organism>